<dbReference type="EC" id="2.7.10.1"/>
<dbReference type="EMBL" id="X03362">
    <property type="protein sequence ID" value="CAA27059.1"/>
    <property type="status" value="ALT_INIT"/>
    <property type="molecule type" value="mRNA"/>
</dbReference>
<dbReference type="EMBL" id="BC061863">
    <property type="protein sequence ID" value="AAH61863.1"/>
    <property type="status" value="ALT_INIT"/>
    <property type="molecule type" value="mRNA"/>
</dbReference>
<dbReference type="PIR" id="A24562">
    <property type="entry name" value="TVRTNU"/>
</dbReference>
<dbReference type="PDB" id="1IIJ">
    <property type="method" value="NMR"/>
    <property type="chains" value="A=647-681"/>
</dbReference>
<dbReference type="PDB" id="1N8Y">
    <property type="method" value="X-ray"/>
    <property type="resolution" value="2.40 A"/>
    <property type="chains" value="C=23-631"/>
</dbReference>
<dbReference type="PDBsum" id="1IIJ"/>
<dbReference type="PDBsum" id="1N8Y"/>
<dbReference type="SMR" id="P06494"/>
<dbReference type="FunCoup" id="P06494">
    <property type="interactions" value="1319"/>
</dbReference>
<dbReference type="STRING" id="10116.ENSRNOP00000040591"/>
<dbReference type="BindingDB" id="P06494"/>
<dbReference type="ChEMBL" id="CHEMBL3848"/>
<dbReference type="GlyCosmos" id="P06494">
    <property type="glycosylation" value="6 sites, No reported glycans"/>
</dbReference>
<dbReference type="GlyGen" id="P06494">
    <property type="glycosylation" value="9 sites"/>
</dbReference>
<dbReference type="iPTMnet" id="P06494"/>
<dbReference type="PhosphoSitePlus" id="P06494"/>
<dbReference type="PaxDb" id="10116-ENSRNOP00000040591"/>
<dbReference type="UCSC" id="RGD:2561">
    <property type="organism name" value="rat"/>
</dbReference>
<dbReference type="AGR" id="RGD:2561"/>
<dbReference type="RGD" id="2561">
    <property type="gene designation" value="Erbb2"/>
</dbReference>
<dbReference type="eggNOG" id="KOG1025">
    <property type="taxonomic scope" value="Eukaryota"/>
</dbReference>
<dbReference type="InParanoid" id="P06494"/>
<dbReference type="PhylomeDB" id="P06494"/>
<dbReference type="BRENDA" id="2.7.10.1">
    <property type="organism ID" value="5301"/>
</dbReference>
<dbReference type="Reactome" id="R-RNO-1227986">
    <property type="pathway name" value="Signaling by ERBB2"/>
</dbReference>
<dbReference type="Reactome" id="R-RNO-1250196">
    <property type="pathway name" value="SHC1 events in ERBB2 signaling"/>
</dbReference>
<dbReference type="Reactome" id="R-RNO-1257604">
    <property type="pathway name" value="PIP3 activates AKT signaling"/>
</dbReference>
<dbReference type="Reactome" id="R-RNO-1306955">
    <property type="pathway name" value="GRB7 events in ERBB2 signaling"/>
</dbReference>
<dbReference type="Reactome" id="R-RNO-1358803">
    <property type="pathway name" value="Downregulation of ERBB2:ERBB3 signaling"/>
</dbReference>
<dbReference type="Reactome" id="R-RNO-1963640">
    <property type="pathway name" value="GRB2 events in ERBB2 signaling"/>
</dbReference>
<dbReference type="Reactome" id="R-RNO-1963642">
    <property type="pathway name" value="PI3K events in ERBB2 signaling"/>
</dbReference>
<dbReference type="Reactome" id="R-RNO-416572">
    <property type="pathway name" value="Sema4D induced cell migration and growth-cone collapse"/>
</dbReference>
<dbReference type="Reactome" id="R-RNO-5673001">
    <property type="pathway name" value="RAF/MAP kinase cascade"/>
</dbReference>
<dbReference type="Reactome" id="R-RNO-6785631">
    <property type="pathway name" value="ERBB2 Regulates Cell Motility"/>
</dbReference>
<dbReference type="Reactome" id="R-RNO-6811558">
    <property type="pathway name" value="PI5P, PP2A and IER3 Regulate PI3K/AKT Signaling"/>
</dbReference>
<dbReference type="Reactome" id="R-RNO-8847993">
    <property type="pathway name" value="ERBB2 Activates PTK6 Signaling"/>
</dbReference>
<dbReference type="Reactome" id="R-RNO-8863795">
    <property type="pathway name" value="Downregulation of ERBB2 signaling"/>
</dbReference>
<dbReference type="Reactome" id="R-RNO-9652282">
    <property type="pathway name" value="Drug-mediated inhibition of ERBB2 signaling"/>
</dbReference>
<dbReference type="EvolutionaryTrace" id="P06494"/>
<dbReference type="PRO" id="PR:P06494"/>
<dbReference type="Proteomes" id="UP000002494">
    <property type="component" value="Unplaced"/>
</dbReference>
<dbReference type="GO" id="GO:0016324">
    <property type="term" value="C:apical plasma membrane"/>
    <property type="evidence" value="ECO:0000314"/>
    <property type="project" value="RGD"/>
</dbReference>
<dbReference type="GO" id="GO:0009925">
    <property type="term" value="C:basal plasma membrane"/>
    <property type="evidence" value="ECO:0000314"/>
    <property type="project" value="RGD"/>
</dbReference>
<dbReference type="GO" id="GO:0016323">
    <property type="term" value="C:basolateral plasma membrane"/>
    <property type="evidence" value="ECO:0000314"/>
    <property type="project" value="RGD"/>
</dbReference>
<dbReference type="GO" id="GO:0005737">
    <property type="term" value="C:cytoplasm"/>
    <property type="evidence" value="ECO:0000266"/>
    <property type="project" value="RGD"/>
</dbReference>
<dbReference type="GO" id="GO:0031410">
    <property type="term" value="C:cytoplasmic vesicle"/>
    <property type="evidence" value="ECO:0000266"/>
    <property type="project" value="RGD"/>
</dbReference>
<dbReference type="GO" id="GO:0005769">
    <property type="term" value="C:early endosome"/>
    <property type="evidence" value="ECO:0007669"/>
    <property type="project" value="UniProtKB-SubCell"/>
</dbReference>
<dbReference type="GO" id="GO:0010008">
    <property type="term" value="C:endosome membrane"/>
    <property type="evidence" value="ECO:0000266"/>
    <property type="project" value="RGD"/>
</dbReference>
<dbReference type="GO" id="GO:0038143">
    <property type="term" value="C:ERBB3:ERBB2 complex"/>
    <property type="evidence" value="ECO:0000266"/>
    <property type="project" value="RGD"/>
</dbReference>
<dbReference type="GO" id="GO:0043219">
    <property type="term" value="C:lateral loop"/>
    <property type="evidence" value="ECO:0000314"/>
    <property type="project" value="RGD"/>
</dbReference>
<dbReference type="GO" id="GO:0005902">
    <property type="term" value="C:microvillus"/>
    <property type="evidence" value="ECO:0000314"/>
    <property type="project" value="RGD"/>
</dbReference>
<dbReference type="GO" id="GO:0043209">
    <property type="term" value="C:myelin sheath"/>
    <property type="evidence" value="ECO:0000266"/>
    <property type="project" value="RGD"/>
</dbReference>
<dbReference type="GO" id="GO:0031594">
    <property type="term" value="C:neuromuscular junction"/>
    <property type="evidence" value="ECO:0000266"/>
    <property type="project" value="RGD"/>
</dbReference>
<dbReference type="GO" id="GO:0043025">
    <property type="term" value="C:neuronal cell body"/>
    <property type="evidence" value="ECO:0000314"/>
    <property type="project" value="RGD"/>
</dbReference>
<dbReference type="GO" id="GO:0005634">
    <property type="term" value="C:nucleus"/>
    <property type="evidence" value="ECO:0000266"/>
    <property type="project" value="RGD"/>
</dbReference>
<dbReference type="GO" id="GO:0048471">
    <property type="term" value="C:perinuclear region of cytoplasm"/>
    <property type="evidence" value="ECO:0000314"/>
    <property type="project" value="RGD"/>
</dbReference>
<dbReference type="GO" id="GO:0005886">
    <property type="term" value="C:plasma membrane"/>
    <property type="evidence" value="ECO:0000266"/>
    <property type="project" value="RGD"/>
</dbReference>
<dbReference type="GO" id="GO:0045211">
    <property type="term" value="C:postsynaptic membrane"/>
    <property type="evidence" value="ECO:0000314"/>
    <property type="project" value="RGD"/>
</dbReference>
<dbReference type="GO" id="GO:0042734">
    <property type="term" value="C:presynaptic membrane"/>
    <property type="evidence" value="ECO:0000266"/>
    <property type="project" value="RGD"/>
</dbReference>
<dbReference type="GO" id="GO:0043235">
    <property type="term" value="C:receptor complex"/>
    <property type="evidence" value="ECO:0000266"/>
    <property type="project" value="RGD"/>
</dbReference>
<dbReference type="GO" id="GO:0032587">
    <property type="term" value="C:ruffle membrane"/>
    <property type="evidence" value="ECO:0007669"/>
    <property type="project" value="UniProtKB-SubCell"/>
</dbReference>
<dbReference type="GO" id="GO:0002116">
    <property type="term" value="C:semaphorin receptor complex"/>
    <property type="evidence" value="ECO:0000266"/>
    <property type="project" value="RGD"/>
</dbReference>
<dbReference type="GO" id="GO:0005524">
    <property type="term" value="F:ATP binding"/>
    <property type="evidence" value="ECO:0007669"/>
    <property type="project" value="UniProtKB-KW"/>
</dbReference>
<dbReference type="GO" id="GO:0015026">
    <property type="term" value="F:coreceptor activity"/>
    <property type="evidence" value="ECO:0000266"/>
    <property type="project" value="RGD"/>
</dbReference>
<dbReference type="GO" id="GO:0003677">
    <property type="term" value="F:DNA binding"/>
    <property type="evidence" value="ECO:0007669"/>
    <property type="project" value="UniProtKB-KW"/>
</dbReference>
<dbReference type="GO" id="GO:0043125">
    <property type="term" value="F:ErbB-3 class receptor binding"/>
    <property type="evidence" value="ECO:0000266"/>
    <property type="project" value="RGD"/>
</dbReference>
<dbReference type="GO" id="GO:0051879">
    <property type="term" value="F:Hsp90 protein binding"/>
    <property type="evidence" value="ECO:0000353"/>
    <property type="project" value="RGD"/>
</dbReference>
<dbReference type="GO" id="GO:0042802">
    <property type="term" value="F:identical protein binding"/>
    <property type="evidence" value="ECO:0000266"/>
    <property type="project" value="RGD"/>
</dbReference>
<dbReference type="GO" id="GO:0046982">
    <property type="term" value="F:protein heterodimerization activity"/>
    <property type="evidence" value="ECO:0000266"/>
    <property type="project" value="RGD"/>
</dbReference>
<dbReference type="GO" id="GO:0004713">
    <property type="term" value="F:protein tyrosine kinase activity"/>
    <property type="evidence" value="ECO:0000314"/>
    <property type="project" value="RGD"/>
</dbReference>
<dbReference type="GO" id="GO:0044877">
    <property type="term" value="F:protein-containing complex binding"/>
    <property type="evidence" value="ECO:0000353"/>
    <property type="project" value="RGD"/>
</dbReference>
<dbReference type="GO" id="GO:0030971">
    <property type="term" value="F:receptor tyrosine kinase binding"/>
    <property type="evidence" value="ECO:0000266"/>
    <property type="project" value="RGD"/>
</dbReference>
<dbReference type="GO" id="GO:0001042">
    <property type="term" value="F:RNA polymerase I core binding"/>
    <property type="evidence" value="ECO:0000250"/>
    <property type="project" value="UniProtKB"/>
</dbReference>
<dbReference type="GO" id="GO:0005102">
    <property type="term" value="F:signaling receptor binding"/>
    <property type="evidence" value="ECO:0000266"/>
    <property type="project" value="RGD"/>
</dbReference>
<dbReference type="GO" id="GO:0004714">
    <property type="term" value="F:transmembrane receptor protein tyrosine kinase activity"/>
    <property type="evidence" value="ECO:0000266"/>
    <property type="project" value="RGD"/>
</dbReference>
<dbReference type="GO" id="GO:0004888">
    <property type="term" value="F:transmembrane signaling receptor activity"/>
    <property type="evidence" value="ECO:0000266"/>
    <property type="project" value="RGD"/>
</dbReference>
<dbReference type="GO" id="GO:0031625">
    <property type="term" value="F:ubiquitin protein ligase binding"/>
    <property type="evidence" value="ECO:0000353"/>
    <property type="project" value="RGD"/>
</dbReference>
<dbReference type="GO" id="GO:0031103">
    <property type="term" value="P:axon regeneration"/>
    <property type="evidence" value="ECO:0000315"/>
    <property type="project" value="RGD"/>
</dbReference>
<dbReference type="GO" id="GO:0008283">
    <property type="term" value="P:cell population proliferation"/>
    <property type="evidence" value="ECO:0000266"/>
    <property type="project" value="RGD"/>
</dbReference>
<dbReference type="GO" id="GO:0007169">
    <property type="term" value="P:cell surface receptor protein tyrosine kinase signaling pathway"/>
    <property type="evidence" value="ECO:0000266"/>
    <property type="project" value="RGD"/>
</dbReference>
<dbReference type="GO" id="GO:0007166">
    <property type="term" value="P:cell surface receptor signaling pathway"/>
    <property type="evidence" value="ECO:0000266"/>
    <property type="project" value="RGD"/>
</dbReference>
<dbReference type="GO" id="GO:0071364">
    <property type="term" value="P:cellular response to epidermal growth factor stimulus"/>
    <property type="evidence" value="ECO:0000250"/>
    <property type="project" value="UniProtKB"/>
</dbReference>
<dbReference type="GO" id="GO:0071363">
    <property type="term" value="P:cellular response to growth factor stimulus"/>
    <property type="evidence" value="ECO:0000250"/>
    <property type="project" value="UniProtKB"/>
</dbReference>
<dbReference type="GO" id="GO:0071260">
    <property type="term" value="P:cellular response to mechanical stimulus"/>
    <property type="evidence" value="ECO:0000270"/>
    <property type="project" value="RGD"/>
</dbReference>
<dbReference type="GO" id="GO:0007173">
    <property type="term" value="P:epidermal growth factor receptor signaling pathway"/>
    <property type="evidence" value="ECO:0000318"/>
    <property type="project" value="GO_Central"/>
</dbReference>
<dbReference type="GO" id="GO:0038134">
    <property type="term" value="P:ERBB2-EGFR signaling pathway"/>
    <property type="evidence" value="ECO:0000266"/>
    <property type="project" value="RGD"/>
</dbReference>
<dbReference type="GO" id="GO:0038133">
    <property type="term" value="P:ERBB2-ERBB3 signaling pathway"/>
    <property type="evidence" value="ECO:0000266"/>
    <property type="project" value="RGD"/>
</dbReference>
<dbReference type="GO" id="GO:0038135">
    <property type="term" value="P:ERBB2-ERBB4 signaling pathway"/>
    <property type="evidence" value="ECO:0000314"/>
    <property type="project" value="MGI"/>
</dbReference>
<dbReference type="GO" id="GO:0044849">
    <property type="term" value="P:estrous cycle"/>
    <property type="evidence" value="ECO:0000315"/>
    <property type="project" value="RGD"/>
</dbReference>
<dbReference type="GO" id="GO:0007565">
    <property type="term" value="P:female pregnancy"/>
    <property type="evidence" value="ECO:0000270"/>
    <property type="project" value="RGD"/>
</dbReference>
<dbReference type="GO" id="GO:0010001">
    <property type="term" value="P:glial cell differentiation"/>
    <property type="evidence" value="ECO:0000316"/>
    <property type="project" value="RGD"/>
</dbReference>
<dbReference type="GO" id="GO:0007507">
    <property type="term" value="P:heart development"/>
    <property type="evidence" value="ECO:0000266"/>
    <property type="project" value="RGD"/>
</dbReference>
<dbReference type="GO" id="GO:0033080">
    <property type="term" value="P:immature T cell proliferation in thymus"/>
    <property type="evidence" value="ECO:0000266"/>
    <property type="project" value="RGD"/>
</dbReference>
<dbReference type="GO" id="GO:0035556">
    <property type="term" value="P:intracellular signal transduction"/>
    <property type="evidence" value="ECO:0000250"/>
    <property type="project" value="UniProtKB"/>
</dbReference>
<dbReference type="GO" id="GO:0001889">
    <property type="term" value="P:liver development"/>
    <property type="evidence" value="ECO:0000270"/>
    <property type="project" value="RGD"/>
</dbReference>
<dbReference type="GO" id="GO:0060056">
    <property type="term" value="P:mammary gland involution"/>
    <property type="evidence" value="ECO:0000270"/>
    <property type="project" value="RGD"/>
</dbReference>
<dbReference type="GO" id="GO:0008045">
    <property type="term" value="P:motor neuron axon guidance"/>
    <property type="evidence" value="ECO:0000266"/>
    <property type="project" value="RGD"/>
</dbReference>
<dbReference type="GO" id="GO:0033555">
    <property type="term" value="P:multicellular organismal response to stress"/>
    <property type="evidence" value="ECO:0000270"/>
    <property type="project" value="RGD"/>
</dbReference>
<dbReference type="GO" id="GO:0042552">
    <property type="term" value="P:myelination"/>
    <property type="evidence" value="ECO:0000266"/>
    <property type="project" value="RGD"/>
</dbReference>
<dbReference type="GO" id="GO:0043066">
    <property type="term" value="P:negative regulation of apoptotic process"/>
    <property type="evidence" value="ECO:0000315"/>
    <property type="project" value="RGD"/>
</dbReference>
<dbReference type="GO" id="GO:0033088">
    <property type="term" value="P:negative regulation of immature T cell proliferation in thymus"/>
    <property type="evidence" value="ECO:0000266"/>
    <property type="project" value="RGD"/>
</dbReference>
<dbReference type="GO" id="GO:0007399">
    <property type="term" value="P:nervous system development"/>
    <property type="evidence" value="ECO:0000266"/>
    <property type="project" value="RGD"/>
</dbReference>
<dbReference type="GO" id="GO:0007528">
    <property type="term" value="P:neuromuscular junction development"/>
    <property type="evidence" value="ECO:0000266"/>
    <property type="project" value="RGD"/>
</dbReference>
<dbReference type="GO" id="GO:0030182">
    <property type="term" value="P:neuron differentiation"/>
    <property type="evidence" value="ECO:0000318"/>
    <property type="project" value="GO_Central"/>
</dbReference>
<dbReference type="GO" id="GO:0099645">
    <property type="term" value="P:neurotransmitter receptor localization to postsynaptic specialization membrane"/>
    <property type="evidence" value="ECO:0000266"/>
    <property type="project" value="RGD"/>
</dbReference>
<dbReference type="GO" id="GO:0048709">
    <property type="term" value="P:oligodendrocyte differentiation"/>
    <property type="evidence" value="ECO:0000266"/>
    <property type="project" value="RGD"/>
</dbReference>
<dbReference type="GO" id="GO:0007422">
    <property type="term" value="P:peripheral nervous system development"/>
    <property type="evidence" value="ECO:0000315"/>
    <property type="project" value="RGD"/>
</dbReference>
<dbReference type="GO" id="GO:0043491">
    <property type="term" value="P:phosphatidylinositol 3-kinase/protein kinase B signal transduction"/>
    <property type="evidence" value="ECO:0000266"/>
    <property type="project" value="RGD"/>
</dbReference>
<dbReference type="GO" id="GO:0045785">
    <property type="term" value="P:positive regulation of cell adhesion"/>
    <property type="evidence" value="ECO:0000266"/>
    <property type="project" value="RGD"/>
</dbReference>
<dbReference type="GO" id="GO:0030307">
    <property type="term" value="P:positive regulation of cell growth"/>
    <property type="evidence" value="ECO:0000250"/>
    <property type="project" value="UniProtKB"/>
</dbReference>
<dbReference type="GO" id="GO:0008284">
    <property type="term" value="P:positive regulation of cell population proliferation"/>
    <property type="evidence" value="ECO:0000315"/>
    <property type="project" value="RGD"/>
</dbReference>
<dbReference type="GO" id="GO:0050679">
    <property type="term" value="P:positive regulation of epithelial cell proliferation"/>
    <property type="evidence" value="ECO:0000266"/>
    <property type="project" value="RGD"/>
</dbReference>
<dbReference type="GO" id="GO:0010628">
    <property type="term" value="P:positive regulation of gene expression"/>
    <property type="evidence" value="ECO:0000266"/>
    <property type="project" value="RGD"/>
</dbReference>
<dbReference type="GO" id="GO:0043410">
    <property type="term" value="P:positive regulation of MAPK cascade"/>
    <property type="evidence" value="ECO:0000315"/>
    <property type="project" value="RGD"/>
</dbReference>
<dbReference type="GO" id="GO:1905710">
    <property type="term" value="P:positive regulation of membrane permeability"/>
    <property type="evidence" value="ECO:0000315"/>
    <property type="project" value="RGD"/>
</dbReference>
<dbReference type="GO" id="GO:2000179">
    <property type="term" value="P:positive regulation of neural precursor cell proliferation"/>
    <property type="evidence" value="ECO:0000315"/>
    <property type="project" value="RGD"/>
</dbReference>
<dbReference type="GO" id="GO:0051897">
    <property type="term" value="P:positive regulation of phosphatidylinositol 3-kinase/protein kinase B signal transduction"/>
    <property type="evidence" value="ECO:0000315"/>
    <property type="project" value="RGD"/>
</dbReference>
<dbReference type="GO" id="GO:0090314">
    <property type="term" value="P:positive regulation of protein targeting to membrane"/>
    <property type="evidence" value="ECO:0000250"/>
    <property type="project" value="UniProtKB"/>
</dbReference>
<dbReference type="GO" id="GO:0046579">
    <property type="term" value="P:positive regulation of Ras protein signal transduction"/>
    <property type="evidence" value="ECO:0000315"/>
    <property type="project" value="RGD"/>
</dbReference>
<dbReference type="GO" id="GO:0035025">
    <property type="term" value="P:positive regulation of Rho protein signal transduction"/>
    <property type="evidence" value="ECO:0000266"/>
    <property type="project" value="RGD"/>
</dbReference>
<dbReference type="GO" id="GO:0045943">
    <property type="term" value="P:positive regulation of transcription by RNA polymerase I"/>
    <property type="evidence" value="ECO:0000250"/>
    <property type="project" value="UniProtKB"/>
</dbReference>
<dbReference type="GO" id="GO:0045727">
    <property type="term" value="P:positive regulation of translation"/>
    <property type="evidence" value="ECO:0000250"/>
    <property type="project" value="UniProtKB"/>
</dbReference>
<dbReference type="GO" id="GO:0045595">
    <property type="term" value="P:regulation of cell differentiation"/>
    <property type="evidence" value="ECO:0000304"/>
    <property type="project" value="RGD"/>
</dbReference>
<dbReference type="GO" id="GO:0042127">
    <property type="term" value="P:regulation of cell population proliferation"/>
    <property type="evidence" value="ECO:0000304"/>
    <property type="project" value="RGD"/>
</dbReference>
<dbReference type="GO" id="GO:0070372">
    <property type="term" value="P:regulation of ERK1 and ERK2 cascade"/>
    <property type="evidence" value="ECO:0000250"/>
    <property type="project" value="UniProtKB"/>
</dbReference>
<dbReference type="GO" id="GO:0032886">
    <property type="term" value="P:regulation of microtubule-based process"/>
    <property type="evidence" value="ECO:0000250"/>
    <property type="project" value="UniProtKB"/>
</dbReference>
<dbReference type="GO" id="GO:0048678">
    <property type="term" value="P:response to axon injury"/>
    <property type="evidence" value="ECO:0000314"/>
    <property type="project" value="RGD"/>
</dbReference>
<dbReference type="GO" id="GO:0071548">
    <property type="term" value="P:response to dexamethasone"/>
    <property type="evidence" value="ECO:0000270"/>
    <property type="project" value="RGD"/>
</dbReference>
<dbReference type="GO" id="GO:0014850">
    <property type="term" value="P:response to muscle activity"/>
    <property type="evidence" value="ECO:0000270"/>
    <property type="project" value="RGD"/>
</dbReference>
<dbReference type="GO" id="GO:0032570">
    <property type="term" value="P:response to progesterone"/>
    <property type="evidence" value="ECO:0000270"/>
    <property type="project" value="RGD"/>
</dbReference>
<dbReference type="GO" id="GO:0033280">
    <property type="term" value="P:response to vitamin D"/>
    <property type="evidence" value="ECO:0000270"/>
    <property type="project" value="RGD"/>
</dbReference>
<dbReference type="GO" id="GO:0009410">
    <property type="term" value="P:response to xenobiotic stimulus"/>
    <property type="evidence" value="ECO:0000270"/>
    <property type="project" value="RGD"/>
</dbReference>
<dbReference type="GO" id="GO:0014044">
    <property type="term" value="P:Schwann cell development"/>
    <property type="evidence" value="ECO:0000266"/>
    <property type="project" value="RGD"/>
</dbReference>
<dbReference type="GO" id="GO:0071526">
    <property type="term" value="P:semaphorin-plexin signaling pathway"/>
    <property type="evidence" value="ECO:0000266"/>
    <property type="project" value="RGD"/>
</dbReference>
<dbReference type="GO" id="GO:0007165">
    <property type="term" value="P:signal transduction"/>
    <property type="evidence" value="ECO:0000266"/>
    <property type="project" value="RGD"/>
</dbReference>
<dbReference type="GO" id="GO:0007519">
    <property type="term" value="P:skeletal muscle tissue development"/>
    <property type="evidence" value="ECO:0000270"/>
    <property type="project" value="RGD"/>
</dbReference>
<dbReference type="GO" id="GO:0048485">
    <property type="term" value="P:sympathetic nervous system development"/>
    <property type="evidence" value="ECO:0000315"/>
    <property type="project" value="RGD"/>
</dbReference>
<dbReference type="GO" id="GO:0043586">
    <property type="term" value="P:tongue development"/>
    <property type="evidence" value="ECO:0000270"/>
    <property type="project" value="RGD"/>
</dbReference>
<dbReference type="GO" id="GO:0042060">
    <property type="term" value="P:wound healing"/>
    <property type="evidence" value="ECO:0000266"/>
    <property type="project" value="RGD"/>
</dbReference>
<dbReference type="CDD" id="cd00064">
    <property type="entry name" value="FU"/>
    <property type="match status" value="3"/>
</dbReference>
<dbReference type="CDD" id="cd05109">
    <property type="entry name" value="PTKc_HER2"/>
    <property type="match status" value="1"/>
</dbReference>
<dbReference type="CDD" id="cd12094">
    <property type="entry name" value="TM_ErbB2"/>
    <property type="match status" value="1"/>
</dbReference>
<dbReference type="FunFam" id="1.20.5.100:FF:000007">
    <property type="entry name" value="Receptor protein-tyrosine kinase"/>
    <property type="match status" value="1"/>
</dbReference>
<dbReference type="FunFam" id="2.10.220.10:FF:000009">
    <property type="entry name" value="Receptor protein-tyrosine kinase"/>
    <property type="match status" value="1"/>
</dbReference>
<dbReference type="FunFam" id="2.10.220.10:FF:000010">
    <property type="entry name" value="Receptor protein-tyrosine kinase"/>
    <property type="match status" value="1"/>
</dbReference>
<dbReference type="FunFam" id="3.30.200.20:FF:000184">
    <property type="entry name" value="Receptor protein-tyrosine kinase"/>
    <property type="match status" value="1"/>
</dbReference>
<dbReference type="FunFam" id="3.80.20.20:FF:000007">
    <property type="entry name" value="Receptor protein-tyrosine kinase"/>
    <property type="match status" value="1"/>
</dbReference>
<dbReference type="FunFam" id="3.80.20.20:FF:000008">
    <property type="entry name" value="Receptor protein-tyrosine kinase"/>
    <property type="match status" value="1"/>
</dbReference>
<dbReference type="FunFam" id="4.10.1140.10:FF:000001">
    <property type="entry name" value="Receptor protein-tyrosine kinase"/>
    <property type="match status" value="1"/>
</dbReference>
<dbReference type="FunFam" id="1.10.510.10:FF:002828">
    <property type="entry name" value="Receptor tyrosine-protein kinase erbB-2"/>
    <property type="match status" value="1"/>
</dbReference>
<dbReference type="Gene3D" id="1.20.5.100">
    <property type="entry name" value="Cytochrome c1, transmembrane anchor, C-terminal"/>
    <property type="match status" value="1"/>
</dbReference>
<dbReference type="Gene3D" id="2.10.220.10">
    <property type="entry name" value="Hormone Receptor, Insulin-like Growth Factor Receptor 1, Chain A, domain 2"/>
    <property type="match status" value="3"/>
</dbReference>
<dbReference type="Gene3D" id="4.10.1140.10">
    <property type="entry name" value="membrane-bound form of the juxtamembrane domain of the epidermal growth factor receptor like domain"/>
    <property type="match status" value="1"/>
</dbReference>
<dbReference type="Gene3D" id="3.30.200.20">
    <property type="entry name" value="Phosphorylase Kinase, domain 1"/>
    <property type="match status" value="1"/>
</dbReference>
<dbReference type="Gene3D" id="3.80.20.20">
    <property type="entry name" value="Receptor L-domain"/>
    <property type="match status" value="2"/>
</dbReference>
<dbReference type="Gene3D" id="1.10.510.10">
    <property type="entry name" value="Transferase(Phosphotransferase) domain 1"/>
    <property type="match status" value="1"/>
</dbReference>
<dbReference type="IDEAL" id="IID50066"/>
<dbReference type="InterPro" id="IPR006211">
    <property type="entry name" value="Furin-like_Cys-rich_dom"/>
</dbReference>
<dbReference type="InterPro" id="IPR006212">
    <property type="entry name" value="Furin_repeat"/>
</dbReference>
<dbReference type="InterPro" id="IPR032778">
    <property type="entry name" value="GF_recep_IV"/>
</dbReference>
<dbReference type="InterPro" id="IPR009030">
    <property type="entry name" value="Growth_fac_rcpt_cys_sf"/>
</dbReference>
<dbReference type="InterPro" id="IPR011009">
    <property type="entry name" value="Kinase-like_dom_sf"/>
</dbReference>
<dbReference type="InterPro" id="IPR000719">
    <property type="entry name" value="Prot_kinase_dom"/>
</dbReference>
<dbReference type="InterPro" id="IPR017441">
    <property type="entry name" value="Protein_kinase_ATP_BS"/>
</dbReference>
<dbReference type="InterPro" id="IPR000494">
    <property type="entry name" value="Rcpt_L-dom"/>
</dbReference>
<dbReference type="InterPro" id="IPR036941">
    <property type="entry name" value="Rcpt_L-dom_sf"/>
</dbReference>
<dbReference type="InterPro" id="IPR050122">
    <property type="entry name" value="RTK"/>
</dbReference>
<dbReference type="InterPro" id="IPR001245">
    <property type="entry name" value="Ser-Thr/Tyr_kinase_cat_dom"/>
</dbReference>
<dbReference type="InterPro" id="IPR049328">
    <property type="entry name" value="TM_ErbB1"/>
</dbReference>
<dbReference type="InterPro" id="IPR008266">
    <property type="entry name" value="Tyr_kinase_AS"/>
</dbReference>
<dbReference type="InterPro" id="IPR020635">
    <property type="entry name" value="Tyr_kinase_cat_dom"/>
</dbReference>
<dbReference type="InterPro" id="IPR016245">
    <property type="entry name" value="Tyr_kinase_EGF/ERB/XmrK_rcpt"/>
</dbReference>
<dbReference type="PANTHER" id="PTHR24416:SF137">
    <property type="entry name" value="RECEPTOR TYROSINE-PROTEIN KINASE ERBB-2"/>
    <property type="match status" value="1"/>
</dbReference>
<dbReference type="PANTHER" id="PTHR24416">
    <property type="entry name" value="TYROSINE-PROTEIN KINASE RECEPTOR"/>
    <property type="match status" value="1"/>
</dbReference>
<dbReference type="Pfam" id="PF00757">
    <property type="entry name" value="Furin-like"/>
    <property type="match status" value="1"/>
</dbReference>
<dbReference type="Pfam" id="PF14843">
    <property type="entry name" value="GF_recep_IV"/>
    <property type="match status" value="1"/>
</dbReference>
<dbReference type="Pfam" id="PF07714">
    <property type="entry name" value="PK_Tyr_Ser-Thr"/>
    <property type="match status" value="1"/>
</dbReference>
<dbReference type="Pfam" id="PF01030">
    <property type="entry name" value="Recep_L_domain"/>
    <property type="match status" value="2"/>
</dbReference>
<dbReference type="Pfam" id="PF21314">
    <property type="entry name" value="TM_ErbB1"/>
    <property type="match status" value="1"/>
</dbReference>
<dbReference type="PIRSF" id="PIRSF000619">
    <property type="entry name" value="TyrPK_EGF-R"/>
    <property type="match status" value="1"/>
</dbReference>
<dbReference type="PRINTS" id="PR00109">
    <property type="entry name" value="TYRKINASE"/>
</dbReference>
<dbReference type="SMART" id="SM00261">
    <property type="entry name" value="FU"/>
    <property type="match status" value="4"/>
</dbReference>
<dbReference type="SMART" id="SM00219">
    <property type="entry name" value="TyrKc"/>
    <property type="match status" value="1"/>
</dbReference>
<dbReference type="SUPFAM" id="SSF57184">
    <property type="entry name" value="Growth factor receptor domain"/>
    <property type="match status" value="2"/>
</dbReference>
<dbReference type="SUPFAM" id="SSF52058">
    <property type="entry name" value="L domain-like"/>
    <property type="match status" value="2"/>
</dbReference>
<dbReference type="SUPFAM" id="SSF56112">
    <property type="entry name" value="Protein kinase-like (PK-like)"/>
    <property type="match status" value="1"/>
</dbReference>
<dbReference type="PROSITE" id="PS00107">
    <property type="entry name" value="PROTEIN_KINASE_ATP"/>
    <property type="match status" value="1"/>
</dbReference>
<dbReference type="PROSITE" id="PS50011">
    <property type="entry name" value="PROTEIN_KINASE_DOM"/>
    <property type="match status" value="1"/>
</dbReference>
<dbReference type="PROSITE" id="PS00109">
    <property type="entry name" value="PROTEIN_KINASE_TYR"/>
    <property type="match status" value="1"/>
</dbReference>
<organism>
    <name type="scientific">Rattus norvegicus</name>
    <name type="common">Rat</name>
    <dbReference type="NCBI Taxonomy" id="10116"/>
    <lineage>
        <taxon>Eukaryota</taxon>
        <taxon>Metazoa</taxon>
        <taxon>Chordata</taxon>
        <taxon>Craniata</taxon>
        <taxon>Vertebrata</taxon>
        <taxon>Euteleostomi</taxon>
        <taxon>Mammalia</taxon>
        <taxon>Eutheria</taxon>
        <taxon>Euarchontoglires</taxon>
        <taxon>Glires</taxon>
        <taxon>Rodentia</taxon>
        <taxon>Myomorpha</taxon>
        <taxon>Muroidea</taxon>
        <taxon>Muridae</taxon>
        <taxon>Murinae</taxon>
        <taxon>Rattus</taxon>
    </lineage>
</organism>
<evidence type="ECO:0000250" key="1"/>
<evidence type="ECO:0000250" key="2">
    <source>
        <dbReference type="UniProtKB" id="P04626"/>
    </source>
</evidence>
<evidence type="ECO:0000250" key="3">
    <source>
        <dbReference type="UniProtKB" id="P70424"/>
    </source>
</evidence>
<evidence type="ECO:0000255" key="4"/>
<evidence type="ECO:0000255" key="5">
    <source>
        <dbReference type="PROSITE-ProRule" id="PRU00159"/>
    </source>
</evidence>
<evidence type="ECO:0000255" key="6">
    <source>
        <dbReference type="PROSITE-ProRule" id="PRU10028"/>
    </source>
</evidence>
<evidence type="ECO:0000256" key="7">
    <source>
        <dbReference type="SAM" id="MobiDB-lite"/>
    </source>
</evidence>
<evidence type="ECO:0000269" key="8">
    <source>
    </source>
</evidence>
<evidence type="ECO:0000305" key="9"/>
<evidence type="ECO:0007744" key="10">
    <source>
        <dbReference type="PDB" id="1N8Y"/>
    </source>
</evidence>
<evidence type="ECO:0007744" key="11">
    <source>
    </source>
</evidence>
<evidence type="ECO:0007829" key="12">
    <source>
        <dbReference type="PDB" id="1IIJ"/>
    </source>
</evidence>
<evidence type="ECO:0007829" key="13">
    <source>
        <dbReference type="PDB" id="1N8Y"/>
    </source>
</evidence>
<sequence>MELAAWCRWGFLLALLPPGIAGTQVCTGTDMKLRLPASPETHLDMLRHLYQGCQVVQGNLELTYVPANASLSFLQDIQEVQGYMLIAHNQVKRVPLQRLRIVRGTQLFEDKYALAVLDNRDPQDNVAASTPGRTPEGLRELQLRSLTEILKGGVLIRGNPQLCYQDMVLWKDVFRKNNQLAPVDIDTNRSRACPPCAPACKDNHCWGESPEDCQILTGTICTSGCARCKGRLPTDCCHEQCAAGCTGPKHSDCLACLHFNHSGICELHCPALVTYNTDTFESMHNPEGRYTFGASCVTTCPYNYLSTEVGSCTLVCPPNNQEVTAEDGTQRCEKCSKPCARVCYGLGMEHLRGARAITSDNVQEFDGCKKIFGSLAFLPESFDGDPSSGIAPLRPEQLQVFETLEEITGYLYISAWPDSLRDLSVFQNLRIIRGRILHDGAYSLTLQGLGIHSLGLRSLRELGSGLALIHRNAHLCFVHTVPWDQLFRNPHQALLHSGNRPEEDLCVSSGLVCNSLCAHGHCWGPGPTQCVNCSHFLRGQECVEECRVWKGLPREYVSDKRCLPCHPECQPQNSSETCFGSEADQCAACAHYKDSSSCVARCPSGVKPDLSYMPIWKYPDEEGICQPCPINCTHSCVDLDERGCPAEQRASPVTFIIATVVGVLLFLILVVVVGILIKRRRQKIRKYTMRRLLQETELVEPLTPSGAMPNQAQMRILKETELRKVKVLGSGAFGTVYKGIWIPDGENVKIPVAIKVLRENTSPKANKEILDEAYVMAGVGSPYVSRLLGICLTSTVQLVTQLMPYGCLLDHVREHRGRLGSQDLLNWCVQIAKGMSYLEDVRLVHRDLAARNVLVKSPNHVKITDFGLARLLDIDETEYHADGGKVPIKWMALESILRRRFTHQSDVWSYGVTVWELMTFGAKPYDGIPAREIPDLLEKGERLPQPPICTIDVYMIMVKCWMIDSECRPRFRELVSEFSRMARDPQRFVVIQNEDLGPSSPMDSTFYRSLLEDDDMGDLVDAEEYLVPQQGFFSPDPTPGTGSTAHRRHRSSSTRSGGGELTLGLEPSEEGPPRSPLAPSEGAGSDVFDGDLAMGVTKGLQSLSPHDLSPLQRYSEDPTLPLPPETDGYVAPLACSPQPEYVNQSEVQPQPPLTPEGPLPPVRPAGATLERPKTLSPGKNGVVKDVFAFGGAVENPEYLVPREGTASPPHPSPAFSPAFDNLYYWDQNSSEQGPPPSNFEGTPTAENPEYLGLDVPV</sequence>
<reference key="1">
    <citation type="journal article" date="1986" name="Nature">
        <title>The neu oncogene encodes an epidermal growth factor receptor-related protein.</title>
        <authorList>
            <person name="Bargmann C.I."/>
            <person name="Hung M.-C."/>
            <person name="Weinberg R.A."/>
        </authorList>
    </citation>
    <scope>NUCLEOTIDE SEQUENCE [MRNA]</scope>
    <source>
        <tissue>Neuroblastoma</tissue>
    </source>
</reference>
<reference key="2">
    <citation type="journal article" date="2004" name="Genome Res.">
        <title>The status, quality, and expansion of the NIH full-length cDNA project: the Mammalian Gene Collection (MGC).</title>
        <authorList>
            <consortium name="The MGC Project Team"/>
        </authorList>
    </citation>
    <scope>NUCLEOTIDE SEQUENCE [LARGE SCALE MRNA]</scope>
    <source>
        <tissue>Prostate</tissue>
    </source>
</reference>
<reference key="3">
    <citation type="journal article" date="1991" name="Carcinogenesis">
        <title>Direct DNA sequencing of the rat neu oncogene transmembrane domain reveals no mutation in urinary bladder carcinomas induced by N-butyl-N-(4-hydroxybutyl)nitrosamine, N-[4-(5-nitro-2-furyl)-2-thiazolyl]formamide or N-methyl-N-nitrosourea.</title>
        <authorList>
            <person name="Masui T."/>
            <person name="Mann A.M."/>
            <person name="Macatee T.L."/>
            <person name="Garland E.M."/>
            <person name="Okamura T."/>
            <person name="Smith R.A."/>
            <person name="Cohen S.M."/>
        </authorList>
    </citation>
    <scope>NUCLEOTIDE SEQUENCE [MRNA] OF 634-699</scope>
</reference>
<reference key="4">
    <citation type="journal article" date="1991" name="Neuron">
        <title>An extended family of protein-tyrosine kinase genes differentially expressed in the vertebrate nervous system.</title>
        <authorList>
            <person name="Lai C."/>
            <person name="Lemke G."/>
        </authorList>
    </citation>
    <scope>NUCLEOTIDE SEQUENCE [MRNA] OF 852-905</scope>
    <source>
        <tissue>Sciatic nerve</tissue>
    </source>
</reference>
<reference key="5">
    <citation type="journal article" date="1994" name="Biochem. Biophys. Res. Commun.">
        <title>Nuclear localization of p185neu tyrosine kinase and its association with transcriptional transactivation.</title>
        <authorList>
            <person name="Xie Y."/>
            <person name="Hung M.C."/>
        </authorList>
    </citation>
    <scope>FUNCTION</scope>
    <scope>SUBCELLULAR LOCATION</scope>
</reference>
<reference key="6">
    <citation type="journal article" date="2012" name="Nat. Commun.">
        <title>Quantitative maps of protein phosphorylation sites across 14 different rat organs and tissues.</title>
        <authorList>
            <person name="Lundby A."/>
            <person name="Secher A."/>
            <person name="Lage K."/>
            <person name="Nordsborg N.B."/>
            <person name="Dmytriyev A."/>
            <person name="Lundby C."/>
            <person name="Olsen J.V."/>
        </authorList>
    </citation>
    <scope>PHOSPHORYLATION [LARGE SCALE ANALYSIS] AT SER-1056; SER-1080 AND SER-1085</scope>
    <scope>IDENTIFICATION BY MASS SPECTROMETRY [LARGE SCALE ANALYSIS]</scope>
</reference>
<reference key="7">
    <citation type="journal article" date="1992" name="EMBO J.">
        <title>Three dimensional structure of the transmembrane region of the proto-oncogenic and oncogenic forms of the neu protein.</title>
        <authorList>
            <person name="Gullick W.J."/>
            <person name="Bottomley A.C."/>
            <person name="Lofts F.J."/>
            <person name="Doak D.G."/>
            <person name="Mulvey D."/>
            <person name="Newman R."/>
            <person name="Crumpton M.J."/>
            <person name="Sternberg M.J.E."/>
            <person name="Campbell I.D."/>
        </authorList>
    </citation>
    <scope>STRUCTURE BY NMR OF 650-668</scope>
</reference>
<reference key="8">
    <citation type="journal article" date="2003" name="Nature">
        <title>Structure of the extracellular region of HER2 alone and in complex with the Herceptin Fab.</title>
        <authorList>
            <person name="Cho H.-S."/>
            <person name="Mason K."/>
            <person name="Ramyar K.X."/>
            <person name="Stanley A.M."/>
            <person name="Gabelli S.B."/>
            <person name="Denney D.W. Jr."/>
            <person name="Leahy D.J."/>
        </authorList>
    </citation>
    <scope>X-RAY CRYSTALLOGRAPHY (2.4 ANGSTROMS) OF 23-631 IN COMPLEX WITH THE ANTIBODY HERCEPTIN</scope>
    <scope>DISULFIDE BONDS</scope>
    <scope>GLYCOSYLATION AT ASN-68; ASN-188 AND ASN-260</scope>
</reference>
<feature type="signal peptide" evidence="4">
    <location>
        <begin position="1"/>
        <end position="22"/>
    </location>
</feature>
<feature type="chain" id="PRO_0000016671" description="Receptor tyrosine-protein kinase erbB-2">
    <location>
        <begin position="23"/>
        <end position="1257"/>
    </location>
</feature>
<feature type="topological domain" description="Extracellular" evidence="4">
    <location>
        <begin position="23"/>
        <end position="654"/>
    </location>
</feature>
<feature type="transmembrane region" description="Helical" evidence="4">
    <location>
        <begin position="655"/>
        <end position="677"/>
    </location>
</feature>
<feature type="topological domain" description="Cytoplasmic" evidence="4">
    <location>
        <begin position="678"/>
        <end position="1257"/>
    </location>
</feature>
<feature type="domain" description="Protein kinase" evidence="5">
    <location>
        <begin position="722"/>
        <end position="989"/>
    </location>
</feature>
<feature type="region of interest" description="Required for interaction with KPNB1 and EEA1" evidence="1">
    <location>
        <begin position="678"/>
        <end position="691"/>
    </location>
</feature>
<feature type="region of interest" description="Disordered" evidence="7">
    <location>
        <begin position="1029"/>
        <end position="1181"/>
    </location>
</feature>
<feature type="region of interest" description="Interaction with PIK3C2B" evidence="1">
    <location>
        <begin position="1197"/>
        <end position="1199"/>
    </location>
</feature>
<feature type="region of interest" description="Disordered" evidence="7">
    <location>
        <begin position="1200"/>
        <end position="1257"/>
    </location>
</feature>
<feature type="short sequence motif" description="Nuclear localization signal" evidence="1">
    <location>
        <begin position="678"/>
        <end position="691"/>
    </location>
</feature>
<feature type="compositionally biased region" description="Pro residues" evidence="7">
    <location>
        <begin position="1149"/>
        <end position="1163"/>
    </location>
</feature>
<feature type="active site" description="Proton acceptor" evidence="5 6">
    <location>
        <position position="847"/>
    </location>
</feature>
<feature type="binding site" evidence="5">
    <location>
        <begin position="728"/>
        <end position="736"/>
    </location>
    <ligand>
        <name>ATP</name>
        <dbReference type="ChEBI" id="CHEBI:30616"/>
    </ligand>
</feature>
<feature type="binding site" evidence="5">
    <location>
        <position position="755"/>
    </location>
    <ligand>
        <name>ATP</name>
        <dbReference type="ChEBI" id="CHEBI:30616"/>
    </ligand>
</feature>
<feature type="modified residue" description="Phosphotyrosine" evidence="2">
    <location>
        <position position="879"/>
    </location>
</feature>
<feature type="modified residue" description="Phosphoserine" evidence="11">
    <location>
        <position position="1056"/>
    </location>
</feature>
<feature type="modified residue" description="Phosphoserine" evidence="11">
    <location>
        <position position="1080"/>
    </location>
</feature>
<feature type="modified residue" description="Phosphoserine" evidence="11">
    <location>
        <position position="1085"/>
    </location>
</feature>
<feature type="modified residue" description="Phosphoserine" evidence="2">
    <location>
        <position position="1109"/>
    </location>
</feature>
<feature type="modified residue" description="Phosphotyrosine" evidence="2">
    <location>
        <position position="1114"/>
    </location>
</feature>
<feature type="modified residue" description="Phosphotyrosine; by autocatalysis" evidence="2">
    <location>
        <position position="1141"/>
    </location>
</feature>
<feature type="modified residue" description="Phosphothreonine" evidence="2">
    <location>
        <position position="1168"/>
    </location>
</feature>
<feature type="modified residue" description="Phosphotyrosine" evidence="2">
    <location>
        <position position="1198"/>
    </location>
</feature>
<feature type="modified residue" description="Phosphotyrosine; by autocatalysis" evidence="2">
    <location>
        <position position="1250"/>
    </location>
</feature>
<feature type="glycosylation site" description="N-linked (GlcNAc...) asparagine" evidence="10">
    <location>
        <position position="68"/>
    </location>
</feature>
<feature type="glycosylation site" description="N-linked (GlcNAc...) asparagine" evidence="10">
    <location>
        <position position="188"/>
    </location>
</feature>
<feature type="glycosylation site" description="N-linked (GlcNAc...) asparagine" evidence="8 10">
    <location>
        <position position="260"/>
    </location>
</feature>
<feature type="glycosylation site" description="N-linked (GlcNAc...) asparagine" evidence="4">
    <location>
        <position position="532"/>
    </location>
</feature>
<feature type="glycosylation site" description="N-linked (GlcNAc...) asparagine" evidence="4">
    <location>
        <position position="573"/>
    </location>
</feature>
<feature type="glycosylation site" description="N-linked (GlcNAc...) asparagine" evidence="4">
    <location>
        <position position="631"/>
    </location>
</feature>
<feature type="disulfide bond" evidence="10">
    <location>
        <begin position="26"/>
        <end position="53"/>
    </location>
</feature>
<feature type="disulfide bond" evidence="10">
    <location>
        <begin position="163"/>
        <end position="193"/>
    </location>
</feature>
<feature type="disulfide bond" evidence="10">
    <location>
        <begin position="196"/>
        <end position="205"/>
    </location>
</feature>
<feature type="disulfide bond" evidence="10">
    <location>
        <begin position="200"/>
        <end position="213"/>
    </location>
</feature>
<feature type="disulfide bond" evidence="10">
    <location>
        <begin position="221"/>
        <end position="228"/>
    </location>
</feature>
<feature type="disulfide bond" evidence="10">
    <location>
        <begin position="225"/>
        <end position="236"/>
    </location>
</feature>
<feature type="disulfide bond" evidence="10">
    <location>
        <begin position="237"/>
        <end position="245"/>
    </location>
</feature>
<feature type="disulfide bond" evidence="10">
    <location>
        <begin position="241"/>
        <end position="253"/>
    </location>
</feature>
<feature type="disulfide bond" evidence="10">
    <location>
        <begin position="256"/>
        <end position="265"/>
    </location>
</feature>
<feature type="disulfide bond" evidence="10">
    <location>
        <begin position="269"/>
        <end position="296"/>
    </location>
</feature>
<feature type="disulfide bond" evidence="10">
    <location>
        <begin position="300"/>
        <end position="312"/>
    </location>
</feature>
<feature type="disulfide bond" evidence="10">
    <location>
        <begin position="316"/>
        <end position="332"/>
    </location>
</feature>
<feature type="disulfide bond" evidence="10">
    <location>
        <begin position="335"/>
        <end position="339"/>
    </location>
</feature>
<feature type="disulfide bond" evidence="10">
    <location>
        <begin position="343"/>
        <end position="368"/>
    </location>
</feature>
<feature type="disulfide bond" evidence="10">
    <location>
        <begin position="476"/>
        <end position="506"/>
    </location>
</feature>
<feature type="disulfide bond" evidence="10">
    <location>
        <begin position="513"/>
        <end position="522"/>
    </location>
</feature>
<feature type="disulfide bond" evidence="10">
    <location>
        <begin position="517"/>
        <end position="530"/>
    </location>
</feature>
<feature type="disulfide bond" evidence="10">
    <location>
        <begin position="533"/>
        <end position="542"/>
    </location>
</feature>
<feature type="disulfide bond" evidence="10">
    <location>
        <begin position="546"/>
        <end position="562"/>
    </location>
</feature>
<feature type="disulfide bond" evidence="10">
    <location>
        <begin position="565"/>
        <end position="578"/>
    </location>
</feature>
<feature type="disulfide bond" evidence="10">
    <location>
        <begin position="569"/>
        <end position="586"/>
    </location>
</feature>
<feature type="disulfide bond" evidence="10">
    <location>
        <begin position="589"/>
        <end position="598"/>
    </location>
</feature>
<feature type="disulfide bond" evidence="10">
    <location>
        <begin position="602"/>
        <end position="625"/>
    </location>
</feature>
<feature type="disulfide bond" evidence="2">
    <location>
        <begin position="628"/>
        <end position="636"/>
    </location>
</feature>
<feature type="disulfide bond" evidence="2">
    <location>
        <begin position="632"/>
        <end position="644"/>
    </location>
</feature>
<feature type="sequence variant" description="In oncogenic NEU.">
    <original>V</original>
    <variation>E</variation>
    <location>
        <position position="661"/>
    </location>
</feature>
<feature type="sequence conflict" description="In Ref. 2; AAH61863." evidence="9" ref="2">
    <original>S</original>
    <variation>G</variation>
    <location>
        <position position="145"/>
    </location>
</feature>
<feature type="sequence conflict" description="In Ref. 2; AAH61863." evidence="9" ref="2">
    <original>LCVSS</original>
    <variation>CGLE</variation>
    <location>
        <begin position="505"/>
        <end position="509"/>
    </location>
</feature>
<feature type="strand" evidence="13">
    <location>
        <begin position="25"/>
        <end position="27"/>
    </location>
</feature>
<feature type="helix" evidence="13">
    <location>
        <begin position="39"/>
        <end position="50"/>
    </location>
</feature>
<feature type="strand" evidence="13">
    <location>
        <begin position="54"/>
        <end position="63"/>
    </location>
</feature>
<feature type="helix" evidence="13">
    <location>
        <begin position="72"/>
        <end position="74"/>
    </location>
</feature>
<feature type="strand" evidence="13">
    <location>
        <begin position="79"/>
        <end position="82"/>
    </location>
</feature>
<feature type="strand" evidence="13">
    <location>
        <begin position="84"/>
        <end position="88"/>
    </location>
</feature>
<feature type="turn" evidence="13">
    <location>
        <begin position="109"/>
        <end position="111"/>
    </location>
</feature>
<feature type="strand" evidence="13">
    <location>
        <begin position="112"/>
        <end position="117"/>
    </location>
</feature>
<feature type="strand" evidence="13">
    <location>
        <begin position="153"/>
        <end position="158"/>
    </location>
</feature>
<feature type="helix" evidence="13">
    <location>
        <begin position="170"/>
        <end position="173"/>
    </location>
</feature>
<feature type="helix" evidence="13">
    <location>
        <begin position="176"/>
        <end position="178"/>
    </location>
</feature>
<feature type="strand" evidence="13">
    <location>
        <begin position="183"/>
        <end position="185"/>
    </location>
</feature>
<feature type="strand" evidence="13">
    <location>
        <begin position="201"/>
        <end position="203"/>
    </location>
</feature>
<feature type="strand" evidence="13">
    <location>
        <begin position="205"/>
        <end position="209"/>
    </location>
</feature>
<feature type="strand" evidence="13">
    <location>
        <begin position="228"/>
        <end position="232"/>
    </location>
</feature>
<feature type="helix" evidence="13">
    <location>
        <begin position="233"/>
        <end position="235"/>
    </location>
</feature>
<feature type="strand" evidence="13">
    <location>
        <begin position="241"/>
        <end position="243"/>
    </location>
</feature>
<feature type="strand" evidence="13">
    <location>
        <begin position="245"/>
        <end position="249"/>
    </location>
</feature>
<feature type="strand" evidence="13">
    <location>
        <begin position="252"/>
        <end position="261"/>
    </location>
</feature>
<feature type="strand" evidence="13">
    <location>
        <begin position="264"/>
        <end position="268"/>
    </location>
</feature>
<feature type="strand" evidence="13">
    <location>
        <begin position="272"/>
        <end position="274"/>
    </location>
</feature>
<feature type="strand" evidence="13">
    <location>
        <begin position="290"/>
        <end position="292"/>
    </location>
</feature>
<feature type="strand" evidence="13">
    <location>
        <begin position="295"/>
        <end position="299"/>
    </location>
</feature>
<feature type="strand" evidence="13">
    <location>
        <begin position="310"/>
        <end position="315"/>
    </location>
</feature>
<feature type="strand" evidence="13">
    <location>
        <begin position="320"/>
        <end position="324"/>
    </location>
</feature>
<feature type="strand" evidence="13">
    <location>
        <begin position="330"/>
        <end position="334"/>
    </location>
</feature>
<feature type="helix" evidence="13">
    <location>
        <begin position="349"/>
        <end position="351"/>
    </location>
</feature>
<feature type="turn" evidence="13">
    <location>
        <begin position="359"/>
        <end position="361"/>
    </location>
</feature>
<feature type="helix" evidence="13">
    <location>
        <begin position="362"/>
        <end position="365"/>
    </location>
</feature>
<feature type="strand" evidence="13">
    <location>
        <begin position="369"/>
        <end position="377"/>
    </location>
</feature>
<feature type="helix" evidence="13">
    <location>
        <begin position="379"/>
        <end position="383"/>
    </location>
</feature>
<feature type="turn" evidence="13">
    <location>
        <begin position="386"/>
        <end position="389"/>
    </location>
</feature>
<feature type="helix" evidence="13">
    <location>
        <begin position="395"/>
        <end position="401"/>
    </location>
</feature>
<feature type="strand" evidence="13">
    <location>
        <begin position="406"/>
        <end position="409"/>
    </location>
</feature>
<feature type="strand" evidence="13">
    <location>
        <begin position="411"/>
        <end position="414"/>
    </location>
</feature>
<feature type="helix" evidence="13">
    <location>
        <begin position="424"/>
        <end position="426"/>
    </location>
</feature>
<feature type="turn" evidence="13">
    <location>
        <begin position="439"/>
        <end position="441"/>
    </location>
</feature>
<feature type="strand" evidence="13">
    <location>
        <begin position="442"/>
        <end position="448"/>
    </location>
</feature>
<feature type="strand" evidence="13">
    <location>
        <begin position="464"/>
        <end position="470"/>
    </location>
</feature>
<feature type="helix" evidence="13">
    <location>
        <begin position="483"/>
        <end position="486"/>
    </location>
</feature>
<feature type="strand" evidence="13">
    <location>
        <begin position="494"/>
        <end position="499"/>
    </location>
</feature>
<feature type="turn" evidence="13">
    <location>
        <begin position="507"/>
        <end position="510"/>
    </location>
</feature>
<feature type="helix" evidence="13">
    <location>
        <begin position="518"/>
        <end position="520"/>
    </location>
</feature>
<feature type="strand" evidence="13">
    <location>
        <begin position="522"/>
        <end position="526"/>
    </location>
</feature>
<feature type="strand" evidence="13">
    <location>
        <begin position="530"/>
        <end position="538"/>
    </location>
</feature>
<feature type="strand" evidence="13">
    <location>
        <begin position="541"/>
        <end position="544"/>
    </location>
</feature>
<feature type="strand" evidence="13">
    <location>
        <begin position="547"/>
        <end position="553"/>
    </location>
</feature>
<feature type="strand" evidence="13">
    <location>
        <begin position="558"/>
        <end position="561"/>
    </location>
</feature>
<feature type="strand" evidence="13">
    <location>
        <begin position="573"/>
        <end position="575"/>
    </location>
</feature>
<feature type="strand" evidence="13">
    <location>
        <begin position="577"/>
        <end position="582"/>
    </location>
</feature>
<feature type="helix" evidence="13">
    <location>
        <begin position="583"/>
        <end position="585"/>
    </location>
</feature>
<feature type="strand" evidence="13">
    <location>
        <begin position="586"/>
        <end position="594"/>
    </location>
</feature>
<feature type="strand" evidence="13">
    <location>
        <begin position="597"/>
        <end position="601"/>
    </location>
</feature>
<feature type="strand" evidence="13">
    <location>
        <begin position="604"/>
        <end position="606"/>
    </location>
</feature>
<feature type="strand" evidence="13">
    <location>
        <begin position="615"/>
        <end position="619"/>
    </location>
</feature>
<feature type="strand" evidence="13">
    <location>
        <begin position="623"/>
        <end position="627"/>
    </location>
</feature>
<feature type="helix" evidence="12">
    <location>
        <begin position="650"/>
        <end position="669"/>
    </location>
</feature>
<feature type="helix" evidence="12">
    <location>
        <begin position="670"/>
        <end position="674"/>
    </location>
</feature>
<feature type="helix" evidence="12">
    <location>
        <begin position="675"/>
        <end position="679"/>
    </location>
</feature>
<proteinExistence type="evidence at protein level"/>
<comment type="function">
    <text evidence="1 2">Protein tyrosine kinase that is part of several cell surface receptor complexes, but that apparently needs a coreceptor for ligand binding. Essential component of a neuregulin-receptor complex, although neuregulins do not interact with it alone. GP30 is a potential ligand for this receptor. Regulates outgrowth and stabilization of peripheral microtubules (MTs). Upon ERBB2 activation, the MEMO1-RHOA-DIAPH1 signaling pathway elicits the phosphorylation and thus the inhibition of GSK3B at cell membrane. This prevents the phosphorylation of APC and CLASP2, allowing its association with the cell membrane. In turn, membrane-bound APC allows the localization of MACF1 to the cell membrane, which is required for microtubule capture and stabilization (By similarity). Interacts (preferentially with the tyrosine phosphorylated form) with CPNE3; this interaction occurs at the cell membrane and is increased in a growth factor heregulin-dependent manner (By similarity).</text>
</comment>
<comment type="function">
    <text evidence="1">In the nucleus is involved in transcriptional regulation. Associates with the 5'-TCAAATTC-3' sequence in the PTGS2/COX-2 promoter and activates its transcription. Implicated in transcriptional activation of CDKN1A; the function involves STAT3 and SRC. Involved in the transcription of rRNA genes by RNA Pol I and enhances protein synthesis and cell growth (By similarity).</text>
</comment>
<comment type="catalytic activity">
    <reaction evidence="6">
        <text>L-tyrosyl-[protein] + ATP = O-phospho-L-tyrosyl-[protein] + ADP + H(+)</text>
        <dbReference type="Rhea" id="RHEA:10596"/>
        <dbReference type="Rhea" id="RHEA-COMP:10136"/>
        <dbReference type="Rhea" id="RHEA-COMP:20101"/>
        <dbReference type="ChEBI" id="CHEBI:15378"/>
        <dbReference type="ChEBI" id="CHEBI:30616"/>
        <dbReference type="ChEBI" id="CHEBI:46858"/>
        <dbReference type="ChEBI" id="CHEBI:61978"/>
        <dbReference type="ChEBI" id="CHEBI:456216"/>
        <dbReference type="EC" id="2.7.10.1"/>
    </reaction>
</comment>
<comment type="subunit">
    <text evidence="2 3">Homodimer. Heterodimer with EGFR, ERBB3 and ERBB4. Part of a complex with EGFR and either PIK3C2A or PIK3C2B. May interact with PIK3C2B when phosphorylated on Tyr-1198. Interacts with PRKCABP and PLXNB1. Interacts (when phosphorylated on Tyr-1250) with MEMO1. Interacts with MUC1. Interacts (when phosphorylated on Tyr-1141) with GRB7 (via SH2 domain). Interacts (when phosphorylated on Tyr-1250) with ERBIN Interacts with SRC, KPNB1, RANBP2, EEA1, CRM1, CLTC, PTK6, RPA194, MYOC and ACTB. Interacts with HSP90AA1 and HSP90AB1; the interaction suppresses ERBB2 kinase activity (By similarity). Interacts with SORL1; this interaction regulates ERBB2 subcellular distribution by promoting its recycling after internalization from endosomes back to the plasma membrane, hence stimulates ERBB2-mediated signaling (By similarity). Interacts with SH3BGRL (By similarity). Interacts with ROR1 (By similarity).</text>
</comment>
<comment type="subcellular location">
    <subcellularLocation>
        <location evidence="2">Cell membrane</location>
        <topology evidence="2">Single-pass type I membrane protein</topology>
    </subcellularLocation>
    <subcellularLocation>
        <location evidence="2">Cell projection</location>
        <location evidence="2">Ruffle membrane</location>
        <topology evidence="2">Single-pass type I membrane protein</topology>
    </subcellularLocation>
    <subcellularLocation>
        <location evidence="2">Early endosome</location>
    </subcellularLocation>
    <subcellularLocation>
        <location evidence="2">Cytoplasm</location>
        <location evidence="2">Perinuclear region</location>
    </subcellularLocation>
    <subcellularLocation>
        <location evidence="2">Nucleus</location>
    </subcellularLocation>
    <text evidence="2">Translocation to the nucleus requires endocytosis, probably endosomal sorting and is mediated by importin beta-1/KPNB1. Also detected in endosome-to-TGN retrograde vesicles. Internalized from the cell membrane in response to EGF stimulation.</text>
</comment>
<comment type="PTM">
    <text evidence="2">Autophosphorylated. Autophosphorylation occurs in trans, i.e. one subunit of the dimeric receptor phosphorylates tyrosine residues on the other subunit. Ligand-binding increases phosphorylation on tyrosine residues. Signaling via SEMA4C promotes phosphorylation at Tyr-1250. Dephosphorylated by PTPN12.</text>
</comment>
<comment type="similarity">
    <text evidence="5">Belongs to the protein kinase superfamily. Tyr protein kinase family. EGF receptor subfamily.</text>
</comment>
<comment type="sequence caution" evidence="9">
    <conflict type="erroneous initiation">
        <sequence resource="EMBL-CDS" id="AAH61863"/>
    </conflict>
    <text>Extended N-terminus.</text>
</comment>
<comment type="sequence caution" evidence="9">
    <conflict type="erroneous initiation">
        <sequence resource="EMBL-CDS" id="CAA27059"/>
    </conflict>
    <text>Extended N-terminus.</text>
</comment>
<protein>
    <recommendedName>
        <fullName>Receptor tyrosine-protein kinase erbB-2</fullName>
        <ecNumber>2.7.10.1</ecNumber>
    </recommendedName>
    <alternativeName>
        <fullName>Epidermal growth factor receptor-related protein</fullName>
    </alternativeName>
    <alternativeName>
        <fullName>Proto-oncogene Neu</fullName>
    </alternativeName>
    <alternativeName>
        <fullName>Proto-oncogene c-ErbB-2</fullName>
    </alternativeName>
    <alternativeName>
        <fullName>p185erbB2</fullName>
    </alternativeName>
    <alternativeName>
        <fullName>p185neu</fullName>
    </alternativeName>
    <cdAntigenName>CD340</cdAntigenName>
</protein>
<gene>
    <name type="primary">Erbb2</name>
    <name type="synonym">Neu</name>
</gene>
<keyword id="KW-0002">3D-structure</keyword>
<keyword id="KW-0010">Activator</keyword>
<keyword id="KW-0067">ATP-binding</keyword>
<keyword id="KW-1003">Cell membrane</keyword>
<keyword id="KW-0966">Cell projection</keyword>
<keyword id="KW-0963">Cytoplasm</keyword>
<keyword id="KW-1015">Disulfide bond</keyword>
<keyword id="KW-0238">DNA-binding</keyword>
<keyword id="KW-0967">Endosome</keyword>
<keyword id="KW-0325">Glycoprotein</keyword>
<keyword id="KW-0418">Kinase</keyword>
<keyword id="KW-0472">Membrane</keyword>
<keyword id="KW-0547">Nucleotide-binding</keyword>
<keyword id="KW-0539">Nucleus</keyword>
<keyword id="KW-0597">Phosphoprotein</keyword>
<keyword id="KW-0656">Proto-oncogene</keyword>
<keyword id="KW-0675">Receptor</keyword>
<keyword id="KW-1185">Reference proteome</keyword>
<keyword id="KW-0732">Signal</keyword>
<keyword id="KW-0804">Transcription</keyword>
<keyword id="KW-0805">Transcription regulation</keyword>
<keyword id="KW-0808">Transferase</keyword>
<keyword id="KW-0812">Transmembrane</keyword>
<keyword id="KW-1133">Transmembrane helix</keyword>
<keyword id="KW-0829">Tyrosine-protein kinase</keyword>
<name>ERBB2_RAT</name>
<accession>P06494</accession>
<accession>Q6P732</accession>